<keyword id="KW-0067">ATP-binding</keyword>
<keyword id="KW-0143">Chaperone</keyword>
<keyword id="KW-0963">Cytoplasm</keyword>
<keyword id="KW-0547">Nucleotide-binding</keyword>
<keyword id="KW-0346">Stress response</keyword>
<gene>
    <name evidence="1" type="primary">htpG</name>
    <name type="ordered locus">VS_2269</name>
</gene>
<dbReference type="EMBL" id="FM954972">
    <property type="protein sequence ID" value="CAV19432.1"/>
    <property type="molecule type" value="Genomic_DNA"/>
</dbReference>
<dbReference type="SMR" id="B7VII6"/>
<dbReference type="STRING" id="575788.VS_2269"/>
<dbReference type="KEGG" id="vsp:VS_2269"/>
<dbReference type="PATRIC" id="fig|575788.5.peg.3531"/>
<dbReference type="eggNOG" id="COG0326">
    <property type="taxonomic scope" value="Bacteria"/>
</dbReference>
<dbReference type="HOGENOM" id="CLU_006684_3_0_6"/>
<dbReference type="Proteomes" id="UP000009100">
    <property type="component" value="Chromosome 1"/>
</dbReference>
<dbReference type="GO" id="GO:0005737">
    <property type="term" value="C:cytoplasm"/>
    <property type="evidence" value="ECO:0007669"/>
    <property type="project" value="UniProtKB-SubCell"/>
</dbReference>
<dbReference type="GO" id="GO:0005524">
    <property type="term" value="F:ATP binding"/>
    <property type="evidence" value="ECO:0007669"/>
    <property type="project" value="UniProtKB-UniRule"/>
</dbReference>
<dbReference type="GO" id="GO:0016887">
    <property type="term" value="F:ATP hydrolysis activity"/>
    <property type="evidence" value="ECO:0007669"/>
    <property type="project" value="InterPro"/>
</dbReference>
<dbReference type="GO" id="GO:0140662">
    <property type="term" value="F:ATP-dependent protein folding chaperone"/>
    <property type="evidence" value="ECO:0007669"/>
    <property type="project" value="InterPro"/>
</dbReference>
<dbReference type="GO" id="GO:0051082">
    <property type="term" value="F:unfolded protein binding"/>
    <property type="evidence" value="ECO:0007669"/>
    <property type="project" value="UniProtKB-UniRule"/>
</dbReference>
<dbReference type="CDD" id="cd16927">
    <property type="entry name" value="HATPase_Hsp90-like"/>
    <property type="match status" value="1"/>
</dbReference>
<dbReference type="FunFam" id="3.30.230.80:FF:000002">
    <property type="entry name" value="Molecular chaperone HtpG"/>
    <property type="match status" value="1"/>
</dbReference>
<dbReference type="FunFam" id="3.30.565.10:FF:000009">
    <property type="entry name" value="Molecular chaperone HtpG"/>
    <property type="match status" value="1"/>
</dbReference>
<dbReference type="Gene3D" id="3.30.230.80">
    <property type="match status" value="1"/>
</dbReference>
<dbReference type="Gene3D" id="3.40.50.11260">
    <property type="match status" value="1"/>
</dbReference>
<dbReference type="Gene3D" id="1.20.120.790">
    <property type="entry name" value="Heat shock protein 90, C-terminal domain"/>
    <property type="match status" value="1"/>
</dbReference>
<dbReference type="Gene3D" id="3.30.565.10">
    <property type="entry name" value="Histidine kinase-like ATPase, C-terminal domain"/>
    <property type="match status" value="1"/>
</dbReference>
<dbReference type="HAMAP" id="MF_00505">
    <property type="entry name" value="HSP90"/>
    <property type="match status" value="1"/>
</dbReference>
<dbReference type="InterPro" id="IPR036890">
    <property type="entry name" value="HATPase_C_sf"/>
</dbReference>
<dbReference type="InterPro" id="IPR019805">
    <property type="entry name" value="Heat_shock_protein_90_CS"/>
</dbReference>
<dbReference type="InterPro" id="IPR037196">
    <property type="entry name" value="HSP90_C"/>
</dbReference>
<dbReference type="InterPro" id="IPR001404">
    <property type="entry name" value="Hsp90_fam"/>
</dbReference>
<dbReference type="InterPro" id="IPR020575">
    <property type="entry name" value="Hsp90_N"/>
</dbReference>
<dbReference type="InterPro" id="IPR020568">
    <property type="entry name" value="Ribosomal_Su5_D2-typ_SF"/>
</dbReference>
<dbReference type="NCBIfam" id="NF003555">
    <property type="entry name" value="PRK05218.1"/>
    <property type="match status" value="1"/>
</dbReference>
<dbReference type="PANTHER" id="PTHR11528">
    <property type="entry name" value="HEAT SHOCK PROTEIN 90 FAMILY MEMBER"/>
    <property type="match status" value="1"/>
</dbReference>
<dbReference type="Pfam" id="PF13589">
    <property type="entry name" value="HATPase_c_3"/>
    <property type="match status" value="1"/>
</dbReference>
<dbReference type="Pfam" id="PF00183">
    <property type="entry name" value="HSP90"/>
    <property type="match status" value="1"/>
</dbReference>
<dbReference type="PIRSF" id="PIRSF002583">
    <property type="entry name" value="Hsp90"/>
    <property type="match status" value="1"/>
</dbReference>
<dbReference type="PRINTS" id="PR00775">
    <property type="entry name" value="HEATSHOCK90"/>
</dbReference>
<dbReference type="SMART" id="SM00387">
    <property type="entry name" value="HATPase_c"/>
    <property type="match status" value="1"/>
</dbReference>
<dbReference type="SUPFAM" id="SSF55874">
    <property type="entry name" value="ATPase domain of HSP90 chaperone/DNA topoisomerase II/histidine kinase"/>
    <property type="match status" value="1"/>
</dbReference>
<dbReference type="SUPFAM" id="SSF110942">
    <property type="entry name" value="HSP90 C-terminal domain"/>
    <property type="match status" value="1"/>
</dbReference>
<dbReference type="SUPFAM" id="SSF54211">
    <property type="entry name" value="Ribosomal protein S5 domain 2-like"/>
    <property type="match status" value="1"/>
</dbReference>
<dbReference type="PROSITE" id="PS00298">
    <property type="entry name" value="HSP90"/>
    <property type="match status" value="1"/>
</dbReference>
<evidence type="ECO:0000255" key="1">
    <source>
        <dbReference type="HAMAP-Rule" id="MF_00505"/>
    </source>
</evidence>
<organism>
    <name type="scientific">Vibrio atlanticus (strain LGP32)</name>
    <name type="common">Vibrio splendidus (strain Mel32)</name>
    <dbReference type="NCBI Taxonomy" id="575788"/>
    <lineage>
        <taxon>Bacteria</taxon>
        <taxon>Pseudomonadati</taxon>
        <taxon>Pseudomonadota</taxon>
        <taxon>Gammaproteobacteria</taxon>
        <taxon>Vibrionales</taxon>
        <taxon>Vibrionaceae</taxon>
        <taxon>Vibrio</taxon>
    </lineage>
</organism>
<feature type="chain" id="PRO_1000146010" description="Chaperone protein HtpG">
    <location>
        <begin position="1"/>
        <end position="634"/>
    </location>
</feature>
<feature type="region of interest" description="A; substrate-binding" evidence="1">
    <location>
        <begin position="1"/>
        <end position="344"/>
    </location>
</feature>
<feature type="region of interest" description="B" evidence="1">
    <location>
        <begin position="345"/>
        <end position="561"/>
    </location>
</feature>
<feature type="region of interest" description="C" evidence="1">
    <location>
        <begin position="562"/>
        <end position="634"/>
    </location>
</feature>
<name>HTPG_VIBA3</name>
<accession>B7VII6</accession>
<reference key="1">
    <citation type="submission" date="2009-02" db="EMBL/GenBank/DDBJ databases">
        <title>Vibrio splendidus str. LGP32 complete genome.</title>
        <authorList>
            <person name="Mazel D."/>
            <person name="Le Roux F."/>
        </authorList>
    </citation>
    <scope>NUCLEOTIDE SEQUENCE [LARGE SCALE GENOMIC DNA]</scope>
    <source>
        <strain>LGP32</strain>
    </source>
</reference>
<protein>
    <recommendedName>
        <fullName evidence="1">Chaperone protein HtpG</fullName>
    </recommendedName>
    <alternativeName>
        <fullName evidence="1">Heat shock protein HtpG</fullName>
    </alternativeName>
    <alternativeName>
        <fullName evidence="1">High temperature protein G</fullName>
    </alternativeName>
</protein>
<comment type="function">
    <text evidence="1">Molecular chaperone. Has ATPase activity.</text>
</comment>
<comment type="subunit">
    <text evidence="1">Homodimer.</text>
</comment>
<comment type="subcellular location">
    <subcellularLocation>
        <location evidence="1">Cytoplasm</location>
    </subcellularLocation>
</comment>
<comment type="similarity">
    <text evidence="1">Belongs to the heat shock protein 90 family.</text>
</comment>
<sequence length="634" mass="71915">MSETATQNKETRGFQSEVKQLLHLMIHSLYSNKEIFLRELISNASDAADKLRFQALSNGDLYQGDADLGVKLSFNAEANTLTISDNGIGMSRDNVIEHLGTIAKSGTADFFSKLSEDQSKDSQLIGQFGVGFYSAFIVADAVTVRTRAAGLANDQAVQWHSAGEGDYTIEDITKESRGTDIILHMREDGKEFLNEWRLREVIGKYSDHIGIPVSIFTAVKDDEGKDTEEKHWEQINKAQALWTRNKSDIEKEEYQEFYKHVSHDFADPLTWSHNKVEGKNDYTSLLYIPAKAPWDMMNRDHKSGLKLYVQRVFIMDDAEQFMPSYMRFVRGLIDSNDLPLNVSREILQDNKVTQSLRGACTKRVLTMLERMAKNDNDKYLEFWKEFGLVLKEGPAEDMANKEKIAGLLRFSSTEVDSSEQTIGLASYVERMKEGQDKIYYLTADSYAAAKNSPHLEQFKAKGIEVVLMYDRIDEYVMNYLTDFDGKQFQSITKAGLDLSKFEGEEEKEKQKETEEEFKSVVERTQSYLGGRVKEVRTTFKLATTPAVVVTDDFEMGTQMAKLLEAAGQAAPEVKYIFEINPEHALVKQMADEADEQAFGRWVELLLGQAMLAEKGSMEDPSQFLGAINELLTKR</sequence>
<proteinExistence type="inferred from homology"/>